<sequence>MKAVHLYEEIEIPQGINVNIEGMKIKVKGPKGEIEKDFSHISGIEIRKEDNKIVVETTFADRRKKAQFYSIIAHIENMFTGVTKGYRYYLKIIYTHFPVTVKVSGNEVQIQNLIGEKNIRRAKIMTGVKVNVKGEDIIVEGQDIEKVGQTAANIELASKITGYDRRVFADGIYIYKKEVIGSEQTD</sequence>
<accession>Q975J6</accession>
<dbReference type="EMBL" id="BA000023">
    <property type="protein sequence ID" value="BAB65404.1"/>
    <property type="molecule type" value="Genomic_DNA"/>
</dbReference>
<dbReference type="RefSeq" id="WP_010978387.1">
    <property type="nucleotide sequence ID" value="NC_003106.2"/>
</dbReference>
<dbReference type="SMR" id="Q975J6"/>
<dbReference type="STRING" id="273063.STK_04180"/>
<dbReference type="GeneID" id="1458351"/>
<dbReference type="KEGG" id="sto:STK_04180"/>
<dbReference type="PATRIC" id="fig|273063.9.peg.484"/>
<dbReference type="eggNOG" id="arCOG04090">
    <property type="taxonomic scope" value="Archaea"/>
</dbReference>
<dbReference type="OrthoDB" id="7144at2157"/>
<dbReference type="Proteomes" id="UP000001015">
    <property type="component" value="Chromosome"/>
</dbReference>
<dbReference type="GO" id="GO:0022625">
    <property type="term" value="C:cytosolic large ribosomal subunit"/>
    <property type="evidence" value="ECO:0007669"/>
    <property type="project" value="TreeGrafter"/>
</dbReference>
<dbReference type="GO" id="GO:0019843">
    <property type="term" value="F:rRNA binding"/>
    <property type="evidence" value="ECO:0007669"/>
    <property type="project" value="UniProtKB-UniRule"/>
</dbReference>
<dbReference type="GO" id="GO:0003735">
    <property type="term" value="F:structural constituent of ribosome"/>
    <property type="evidence" value="ECO:0007669"/>
    <property type="project" value="InterPro"/>
</dbReference>
<dbReference type="GO" id="GO:0002181">
    <property type="term" value="P:cytoplasmic translation"/>
    <property type="evidence" value="ECO:0007669"/>
    <property type="project" value="TreeGrafter"/>
</dbReference>
<dbReference type="FunFam" id="3.90.930.12:FF:000008">
    <property type="entry name" value="50S ribosomal protein L6"/>
    <property type="match status" value="1"/>
</dbReference>
<dbReference type="FunFam" id="3.90.930.12:FF:000004">
    <property type="entry name" value="60S ribosomal protein L9"/>
    <property type="match status" value="1"/>
</dbReference>
<dbReference type="Gene3D" id="3.90.930.12">
    <property type="entry name" value="Ribosomal protein L6, alpha-beta domain"/>
    <property type="match status" value="2"/>
</dbReference>
<dbReference type="HAMAP" id="MF_01365_A">
    <property type="entry name" value="Ribosomal_uL6_A"/>
    <property type="match status" value="1"/>
</dbReference>
<dbReference type="InterPro" id="IPR000702">
    <property type="entry name" value="Ribosomal_uL6-like"/>
</dbReference>
<dbReference type="InterPro" id="IPR036789">
    <property type="entry name" value="Ribosomal_uL6-like_a/b-dom_sf"/>
</dbReference>
<dbReference type="InterPro" id="IPR020040">
    <property type="entry name" value="Ribosomal_uL6_a/b-dom"/>
</dbReference>
<dbReference type="InterPro" id="IPR019907">
    <property type="entry name" value="Ribosomal_uL6_arc"/>
</dbReference>
<dbReference type="InterPro" id="IPR002359">
    <property type="entry name" value="Ribosomal_uL6_CS2"/>
</dbReference>
<dbReference type="NCBIfam" id="NF004037">
    <property type="entry name" value="PRK05518.1"/>
    <property type="match status" value="1"/>
</dbReference>
<dbReference type="NCBIfam" id="TIGR03653">
    <property type="entry name" value="uL6_arch"/>
    <property type="match status" value="1"/>
</dbReference>
<dbReference type="PANTHER" id="PTHR11655:SF16">
    <property type="entry name" value="60S RIBOSOMAL PROTEIN L9"/>
    <property type="match status" value="1"/>
</dbReference>
<dbReference type="PANTHER" id="PTHR11655">
    <property type="entry name" value="60S/50S RIBOSOMAL PROTEIN L6/L9"/>
    <property type="match status" value="1"/>
</dbReference>
<dbReference type="Pfam" id="PF00347">
    <property type="entry name" value="Ribosomal_L6"/>
    <property type="match status" value="2"/>
</dbReference>
<dbReference type="PIRSF" id="PIRSF002162">
    <property type="entry name" value="Ribosomal_L6"/>
    <property type="match status" value="1"/>
</dbReference>
<dbReference type="SUPFAM" id="SSF56053">
    <property type="entry name" value="Ribosomal protein L6"/>
    <property type="match status" value="2"/>
</dbReference>
<dbReference type="PROSITE" id="PS00700">
    <property type="entry name" value="RIBOSOMAL_L6_2"/>
    <property type="match status" value="1"/>
</dbReference>
<evidence type="ECO:0000255" key="1">
    <source>
        <dbReference type="HAMAP-Rule" id="MF_01365"/>
    </source>
</evidence>
<evidence type="ECO:0000305" key="2"/>
<organism>
    <name type="scientific">Sulfurisphaera tokodaii (strain DSM 16993 / JCM 10545 / NBRC 100140 / 7)</name>
    <name type="common">Sulfolobus tokodaii</name>
    <dbReference type="NCBI Taxonomy" id="273063"/>
    <lineage>
        <taxon>Archaea</taxon>
        <taxon>Thermoproteota</taxon>
        <taxon>Thermoprotei</taxon>
        <taxon>Sulfolobales</taxon>
        <taxon>Sulfolobaceae</taxon>
        <taxon>Sulfurisphaera</taxon>
    </lineage>
</organism>
<feature type="chain" id="PRO_0000260998" description="Large ribosomal subunit protein uL6">
    <location>
        <begin position="1"/>
        <end position="186"/>
    </location>
</feature>
<comment type="function">
    <text evidence="1">This protein binds to the 23S rRNA, and is important in its secondary structure. It is located near the subunit interface in the base of the L7/L12 stalk, and near the tRNA binding site of the peptidyltransferase center.</text>
</comment>
<comment type="subunit">
    <text evidence="1">Part of the 50S ribosomal subunit.</text>
</comment>
<comment type="similarity">
    <text evidence="1">Belongs to the universal ribosomal protein uL6 family.</text>
</comment>
<proteinExistence type="inferred from homology"/>
<gene>
    <name evidence="1" type="primary">rpl6</name>
    <name type="ordered locus">STK_04180</name>
</gene>
<reference key="1">
    <citation type="journal article" date="2001" name="DNA Res.">
        <title>Complete genome sequence of an aerobic thermoacidophilic Crenarchaeon, Sulfolobus tokodaii strain7.</title>
        <authorList>
            <person name="Kawarabayasi Y."/>
            <person name="Hino Y."/>
            <person name="Horikawa H."/>
            <person name="Jin-no K."/>
            <person name="Takahashi M."/>
            <person name="Sekine M."/>
            <person name="Baba S."/>
            <person name="Ankai A."/>
            <person name="Kosugi H."/>
            <person name="Hosoyama A."/>
            <person name="Fukui S."/>
            <person name="Nagai Y."/>
            <person name="Nishijima K."/>
            <person name="Otsuka R."/>
            <person name="Nakazawa H."/>
            <person name="Takamiya M."/>
            <person name="Kato Y."/>
            <person name="Yoshizawa T."/>
            <person name="Tanaka T."/>
            <person name="Kudoh Y."/>
            <person name="Yamazaki J."/>
            <person name="Kushida N."/>
            <person name="Oguchi A."/>
            <person name="Aoki K."/>
            <person name="Masuda S."/>
            <person name="Yanagii M."/>
            <person name="Nishimura M."/>
            <person name="Yamagishi A."/>
            <person name="Oshima T."/>
            <person name="Kikuchi H."/>
        </authorList>
    </citation>
    <scope>NUCLEOTIDE SEQUENCE [LARGE SCALE GENOMIC DNA]</scope>
    <source>
        <strain>DSM 16993 / JCM 10545 / NBRC 100140 / 7</strain>
    </source>
</reference>
<protein>
    <recommendedName>
        <fullName evidence="1">Large ribosomal subunit protein uL6</fullName>
    </recommendedName>
    <alternativeName>
        <fullName evidence="2">50S ribosomal protein L6</fullName>
    </alternativeName>
</protein>
<keyword id="KW-1185">Reference proteome</keyword>
<keyword id="KW-0687">Ribonucleoprotein</keyword>
<keyword id="KW-0689">Ribosomal protein</keyword>
<keyword id="KW-0694">RNA-binding</keyword>
<keyword id="KW-0699">rRNA-binding</keyword>
<name>RL6_SULTO</name>